<accession>P38341</accession>
<accession>D6VQQ9</accession>
<name>MIC12_YEAST</name>
<evidence type="ECO:0000255" key="1"/>
<evidence type="ECO:0000269" key="2">
    <source>
    </source>
</evidence>
<evidence type="ECO:0000269" key="3">
    <source>
    </source>
</evidence>
<evidence type="ECO:0000269" key="4">
    <source>
    </source>
</evidence>
<evidence type="ECO:0000269" key="5">
    <source>
    </source>
</evidence>
<evidence type="ECO:0000269" key="6">
    <source>
    </source>
</evidence>
<evidence type="ECO:0000269" key="7">
    <source>
    </source>
</evidence>
<evidence type="ECO:0000305" key="8"/>
<dbReference type="EMBL" id="X70529">
    <property type="protein sequence ID" value="CAA49928.1"/>
    <property type="molecule type" value="Genomic_DNA"/>
</dbReference>
<dbReference type="EMBL" id="Z36131">
    <property type="protein sequence ID" value="CAA85225.1"/>
    <property type="molecule type" value="Genomic_DNA"/>
</dbReference>
<dbReference type="EMBL" id="AY558435">
    <property type="protein sequence ID" value="AAS56761.1"/>
    <property type="molecule type" value="Genomic_DNA"/>
</dbReference>
<dbReference type="EMBL" id="BK006936">
    <property type="protein sequence ID" value="DAA07379.1"/>
    <property type="molecule type" value="Genomic_DNA"/>
</dbReference>
<dbReference type="PIR" id="S32964">
    <property type="entry name" value="S32964"/>
</dbReference>
<dbReference type="RefSeq" id="NP_009821.3">
    <property type="nucleotide sequence ID" value="NM_001178610.3"/>
</dbReference>
<dbReference type="SMR" id="P38341"/>
<dbReference type="BioGRID" id="32959">
    <property type="interactions" value="225"/>
</dbReference>
<dbReference type="ComplexPortal" id="CPX-140">
    <property type="entry name" value="MICOS mitochondrial contact site and cristae organizing system complex"/>
</dbReference>
<dbReference type="DIP" id="DIP-4886N"/>
<dbReference type="FunCoup" id="P38341">
    <property type="interactions" value="75"/>
</dbReference>
<dbReference type="IntAct" id="P38341">
    <property type="interactions" value="5"/>
</dbReference>
<dbReference type="MINT" id="P38341"/>
<dbReference type="STRING" id="4932.YBR262C"/>
<dbReference type="PaxDb" id="4932-YBR262C"/>
<dbReference type="PeptideAtlas" id="P38341"/>
<dbReference type="EnsemblFungi" id="YBR262C_mRNA">
    <property type="protein sequence ID" value="YBR262C"/>
    <property type="gene ID" value="YBR262C"/>
</dbReference>
<dbReference type="GeneID" id="852566"/>
<dbReference type="KEGG" id="sce:YBR262C"/>
<dbReference type="AGR" id="SGD:S000000466"/>
<dbReference type="SGD" id="S000000466">
    <property type="gene designation" value="MIC12"/>
</dbReference>
<dbReference type="VEuPathDB" id="FungiDB:YBR262C"/>
<dbReference type="HOGENOM" id="CLU_164154_0_0_1"/>
<dbReference type="InParanoid" id="P38341"/>
<dbReference type="OMA" id="DIWNEQI"/>
<dbReference type="OrthoDB" id="4037694at2759"/>
<dbReference type="BioCyc" id="YEAST:G3O-29186-MONOMER"/>
<dbReference type="BioGRID-ORCS" id="852566">
    <property type="hits" value="7 hits in 10 CRISPR screens"/>
</dbReference>
<dbReference type="CD-CODE" id="E03F929F">
    <property type="entry name" value="Stress granule"/>
</dbReference>
<dbReference type="PRO" id="PR:P38341"/>
<dbReference type="Proteomes" id="UP000002311">
    <property type="component" value="Chromosome II"/>
</dbReference>
<dbReference type="RNAct" id="P38341">
    <property type="molecule type" value="protein"/>
</dbReference>
<dbReference type="GO" id="GO:0061617">
    <property type="term" value="C:MICOS complex"/>
    <property type="evidence" value="ECO:0000314"/>
    <property type="project" value="SGD"/>
</dbReference>
<dbReference type="GO" id="GO:0044284">
    <property type="term" value="C:mitochondrial crista junction"/>
    <property type="evidence" value="ECO:0000314"/>
    <property type="project" value="ComplexPortal"/>
</dbReference>
<dbReference type="GO" id="GO:0005743">
    <property type="term" value="C:mitochondrial inner membrane"/>
    <property type="evidence" value="ECO:0000304"/>
    <property type="project" value="Reactome"/>
</dbReference>
<dbReference type="GO" id="GO:0005739">
    <property type="term" value="C:mitochondrion"/>
    <property type="evidence" value="ECO:0000314"/>
    <property type="project" value="ComplexPortal"/>
</dbReference>
<dbReference type="GO" id="GO:0042407">
    <property type="term" value="P:cristae formation"/>
    <property type="evidence" value="ECO:0000315"/>
    <property type="project" value="SGD"/>
</dbReference>
<dbReference type="GO" id="GO:0065003">
    <property type="term" value="P:protein-containing complex assembly"/>
    <property type="evidence" value="ECO:0000315"/>
    <property type="project" value="SGD"/>
</dbReference>
<dbReference type="InterPro" id="IPR031463">
    <property type="entry name" value="Mic12"/>
</dbReference>
<dbReference type="Pfam" id="PF17050">
    <property type="entry name" value="AIM5"/>
    <property type="match status" value="1"/>
</dbReference>
<gene>
    <name type="primary">MIC12</name>
    <name type="synonym">AIM5</name>
    <name type="synonym">FMP51</name>
    <name type="synonym">MCS12</name>
    <name type="ordered locus">YBR262C</name>
    <name type="ORF">YBR1731</name>
</gene>
<keyword id="KW-0472">Membrane</keyword>
<keyword id="KW-0496">Mitochondrion</keyword>
<keyword id="KW-0999">Mitochondrion inner membrane</keyword>
<keyword id="KW-1185">Reference proteome</keyword>
<keyword id="KW-0812">Transmembrane</keyword>
<keyword id="KW-1133">Transmembrane helix</keyword>
<reference key="1">
    <citation type="journal article" date="1993" name="Yeast">
        <title>The complete sequence of a 19,482 bp segment located on the right arm of chromosome II from Saccharomyces cerevisiae.</title>
        <authorList>
            <person name="Doignon F."/>
            <person name="Biteau N."/>
            <person name="Crouzet M."/>
            <person name="Aigle M."/>
        </authorList>
    </citation>
    <scope>NUCLEOTIDE SEQUENCE [GENOMIC DNA]</scope>
    <source>
        <strain>ATCC 204508 / S288c</strain>
    </source>
</reference>
<reference key="2">
    <citation type="journal article" date="1994" name="EMBO J.">
        <title>Complete DNA sequence of yeast chromosome II.</title>
        <authorList>
            <person name="Feldmann H."/>
            <person name="Aigle M."/>
            <person name="Aljinovic G."/>
            <person name="Andre B."/>
            <person name="Baclet M.C."/>
            <person name="Barthe C."/>
            <person name="Baur A."/>
            <person name="Becam A.-M."/>
            <person name="Biteau N."/>
            <person name="Boles E."/>
            <person name="Brandt T."/>
            <person name="Brendel M."/>
            <person name="Brueckner M."/>
            <person name="Bussereau F."/>
            <person name="Christiansen C."/>
            <person name="Contreras R."/>
            <person name="Crouzet M."/>
            <person name="Cziepluch C."/>
            <person name="Demolis N."/>
            <person name="Delaveau T."/>
            <person name="Doignon F."/>
            <person name="Domdey H."/>
            <person name="Duesterhus S."/>
            <person name="Dubois E."/>
            <person name="Dujon B."/>
            <person name="El Bakkoury M."/>
            <person name="Entian K.-D."/>
            <person name="Feuermann M."/>
            <person name="Fiers W."/>
            <person name="Fobo G.M."/>
            <person name="Fritz C."/>
            <person name="Gassenhuber J."/>
            <person name="Glansdorff N."/>
            <person name="Goffeau A."/>
            <person name="Grivell L.A."/>
            <person name="de Haan M."/>
            <person name="Hein C."/>
            <person name="Herbert C.J."/>
            <person name="Hollenberg C.P."/>
            <person name="Holmstroem K."/>
            <person name="Jacq C."/>
            <person name="Jacquet M."/>
            <person name="Jauniaux J.-C."/>
            <person name="Jonniaux J.-L."/>
            <person name="Kallesoee T."/>
            <person name="Kiesau P."/>
            <person name="Kirchrath L."/>
            <person name="Koetter P."/>
            <person name="Korol S."/>
            <person name="Liebl S."/>
            <person name="Logghe M."/>
            <person name="Lohan A.J.E."/>
            <person name="Louis E.J."/>
            <person name="Li Z.Y."/>
            <person name="Maat M.J."/>
            <person name="Mallet L."/>
            <person name="Mannhaupt G."/>
            <person name="Messenguy F."/>
            <person name="Miosga T."/>
            <person name="Molemans F."/>
            <person name="Mueller S."/>
            <person name="Nasr F."/>
            <person name="Obermaier B."/>
            <person name="Perea J."/>
            <person name="Pierard A."/>
            <person name="Piravandi E."/>
            <person name="Pohl F.M."/>
            <person name="Pohl T.M."/>
            <person name="Potier S."/>
            <person name="Proft M."/>
            <person name="Purnelle B."/>
            <person name="Ramezani Rad M."/>
            <person name="Rieger M."/>
            <person name="Rose M."/>
            <person name="Schaaff-Gerstenschlaeger I."/>
            <person name="Scherens B."/>
            <person name="Schwarzlose C."/>
            <person name="Skala J."/>
            <person name="Slonimski P.P."/>
            <person name="Smits P.H.M."/>
            <person name="Souciet J.-L."/>
            <person name="Steensma H.Y."/>
            <person name="Stucka R."/>
            <person name="Urrestarazu L.A."/>
            <person name="van der Aart Q.J.M."/>
            <person name="Van Dyck L."/>
            <person name="Vassarotti A."/>
            <person name="Vetter I."/>
            <person name="Vierendeels F."/>
            <person name="Vissers S."/>
            <person name="Wagner G."/>
            <person name="de Wergifosse P."/>
            <person name="Wolfe K.H."/>
            <person name="Zagulski M."/>
            <person name="Zimmermann F.K."/>
            <person name="Mewes H.-W."/>
            <person name="Kleine K."/>
        </authorList>
    </citation>
    <scope>NUCLEOTIDE SEQUENCE [LARGE SCALE GENOMIC DNA]</scope>
    <source>
        <strain>ATCC 204508 / S288c</strain>
    </source>
</reference>
<reference key="3">
    <citation type="journal article" date="2014" name="G3 (Bethesda)">
        <title>The reference genome sequence of Saccharomyces cerevisiae: Then and now.</title>
        <authorList>
            <person name="Engel S.R."/>
            <person name="Dietrich F.S."/>
            <person name="Fisk D.G."/>
            <person name="Binkley G."/>
            <person name="Balakrishnan R."/>
            <person name="Costanzo M.C."/>
            <person name="Dwight S.S."/>
            <person name="Hitz B.C."/>
            <person name="Karra K."/>
            <person name="Nash R.S."/>
            <person name="Weng S."/>
            <person name="Wong E.D."/>
            <person name="Lloyd P."/>
            <person name="Skrzypek M.S."/>
            <person name="Miyasato S.R."/>
            <person name="Simison M."/>
            <person name="Cherry J.M."/>
        </authorList>
    </citation>
    <scope>GENOME REANNOTATION</scope>
    <source>
        <strain>ATCC 204508 / S288c</strain>
    </source>
</reference>
<reference key="4">
    <citation type="journal article" date="2007" name="Genome Res.">
        <title>Approaching a complete repository of sequence-verified protein-encoding clones for Saccharomyces cerevisiae.</title>
        <authorList>
            <person name="Hu Y."/>
            <person name="Rolfs A."/>
            <person name="Bhullar B."/>
            <person name="Murthy T.V.S."/>
            <person name="Zhu C."/>
            <person name="Berger M.F."/>
            <person name="Camargo A.A."/>
            <person name="Kelley F."/>
            <person name="McCarron S."/>
            <person name="Jepson D."/>
            <person name="Richardson A."/>
            <person name="Raphael J."/>
            <person name="Moreira D."/>
            <person name="Taycher E."/>
            <person name="Zuo D."/>
            <person name="Mohr S."/>
            <person name="Kane M.F."/>
            <person name="Williamson J."/>
            <person name="Simpson A.J.G."/>
            <person name="Bulyk M.L."/>
            <person name="Harlow E."/>
            <person name="Marsischky G."/>
            <person name="Kolodner R.D."/>
            <person name="LaBaer J."/>
        </authorList>
    </citation>
    <scope>NUCLEOTIDE SEQUENCE [GENOMIC DNA]</scope>
    <source>
        <strain>ATCC 204508 / S288c</strain>
    </source>
</reference>
<reference key="5">
    <citation type="journal article" date="2003" name="Nature">
        <title>Global analysis of protein localization in budding yeast.</title>
        <authorList>
            <person name="Huh W.-K."/>
            <person name="Falvo J.V."/>
            <person name="Gerke L.C."/>
            <person name="Carroll A.S."/>
            <person name="Howson R.W."/>
            <person name="Weissman J.S."/>
            <person name="O'Shea E.K."/>
        </authorList>
    </citation>
    <scope>SUBCELLULAR LOCATION [LARGE SCALE ANALYSIS]</scope>
</reference>
<reference key="6">
    <citation type="journal article" date="2003" name="Nature">
        <title>Global analysis of protein expression in yeast.</title>
        <authorList>
            <person name="Ghaemmaghami S."/>
            <person name="Huh W.-K."/>
            <person name="Bower K."/>
            <person name="Howson R.W."/>
            <person name="Belle A."/>
            <person name="Dephoure N."/>
            <person name="O'Shea E.K."/>
            <person name="Weissman J.S."/>
        </authorList>
    </citation>
    <scope>LEVEL OF PROTEIN EXPRESSION [LARGE SCALE ANALYSIS]</scope>
</reference>
<reference key="7">
    <citation type="journal article" date="2009" name="PLoS Genet.">
        <title>Computationally driven, quantitative experiments discover genes required for mitochondrial biogenesis.</title>
        <authorList>
            <person name="Hess D.C."/>
            <person name="Myers C.L."/>
            <person name="Huttenhower C."/>
            <person name="Hibbs M.A."/>
            <person name="Hayes A.P."/>
            <person name="Paw J."/>
            <person name="Clore J.J."/>
            <person name="Mendoza R.M."/>
            <person name="Luis B.S."/>
            <person name="Nislow C."/>
            <person name="Giaever G."/>
            <person name="Costanzo M."/>
            <person name="Troyanskaya O.G."/>
            <person name="Caudy A.A."/>
        </authorList>
    </citation>
    <scope>DISRUPTION PHENOTYPE</scope>
</reference>
<reference key="8">
    <citation type="journal article" date="2011" name="Dev. Cell">
        <title>Dual role of mitofilin in mitochondrial membrane organization and protein biogenesis.</title>
        <authorList>
            <person name="von der Malsburg K."/>
            <person name="Muller J.M."/>
            <person name="Bohnert M."/>
            <person name="Oeljeklaus S."/>
            <person name="Kwiatkowska P."/>
            <person name="Becker T."/>
            <person name="Loniewska-Lwowska A."/>
            <person name="Wiese S."/>
            <person name="Rao S."/>
            <person name="Milenkovic D."/>
            <person name="Hutu D.P."/>
            <person name="Zerbes R.M."/>
            <person name="Schulze-Specking A."/>
            <person name="Meyer H.E."/>
            <person name="Martinou J.C."/>
            <person name="Rospert S."/>
            <person name="Rehling P."/>
            <person name="Meisinger C."/>
            <person name="Veenhuis M."/>
            <person name="Warscheid B."/>
            <person name="van der Klei I.J."/>
            <person name="Pfanner N."/>
            <person name="Chacinska A."/>
            <person name="van der Laan M."/>
        </authorList>
    </citation>
    <scope>FUNCTION</scope>
    <scope>COMPOSITION OF THE MICOS COMPLEX</scope>
    <scope>SUBCELLULAR LOCATION</scope>
    <scope>DISRUPTION PHENOTYPE</scope>
</reference>
<reference key="9">
    <citation type="journal article" date="2011" name="EMBO J.">
        <title>The mitochondrial contact site complex, a determinant of mitochondrial architecture.</title>
        <authorList>
            <person name="Harner M."/>
            <person name="Korner C."/>
            <person name="Walther D."/>
            <person name="Mokranjac D."/>
            <person name="Kaesmacher J."/>
            <person name="Welsch U."/>
            <person name="Griffith J."/>
            <person name="Mann M."/>
            <person name="Reggiori F."/>
            <person name="Neupert W."/>
        </authorList>
    </citation>
    <scope>IDENTIFICATION IN THE MICOS COMPLEX</scope>
    <scope>MASS SPECTROMETRY</scope>
    <scope>SUBCELLULAR LOCATION</scope>
    <scope>TOPOLOGY</scope>
</reference>
<reference key="10">
    <citation type="journal article" date="2011" name="J. Cell Biol.">
        <title>A mitochondrial-focused genetic interaction map reveals a scaffold-like complex required for inner membrane organization in mitochondria.</title>
        <authorList>
            <person name="Hoppins S."/>
            <person name="Collins S.R."/>
            <person name="Cassidy-Stone A."/>
            <person name="Hummel E."/>
            <person name="Devay R.M."/>
            <person name="Lackner L.L."/>
            <person name="Westermann B."/>
            <person name="Schuldiner M."/>
            <person name="Weissman J.S."/>
            <person name="Nunnari J."/>
        </authorList>
    </citation>
    <scope>FUNCTION</scope>
    <scope>COMPOSITION OF THE MICOS COMPLEX</scope>
    <scope>INTERACTION WITH OM45 AND POR1</scope>
    <scope>SUBCELLULAR LOCATION</scope>
    <scope>DISRUPTION PHENOTYPE</scope>
</reference>
<reference key="11">
    <citation type="journal article" date="2012" name="Proc. Natl. Acad. Sci. U.S.A.">
        <title>N-terminal acetylome analyses and functional insights of the N-terminal acetyltransferase NatB.</title>
        <authorList>
            <person name="Van Damme P."/>
            <person name="Lasa M."/>
            <person name="Polevoda B."/>
            <person name="Gazquez C."/>
            <person name="Elosegui-Artola A."/>
            <person name="Kim D.S."/>
            <person name="De Juan-Pardo E."/>
            <person name="Demeyer K."/>
            <person name="Hole K."/>
            <person name="Larrea E."/>
            <person name="Timmerman E."/>
            <person name="Prieto J."/>
            <person name="Arnesen T."/>
            <person name="Sherman F."/>
            <person name="Gevaert K."/>
            <person name="Aldabe R."/>
        </authorList>
    </citation>
    <scope>IDENTIFICATION BY MASS SPECTROMETRY [LARGE SCALE ANALYSIS]</scope>
</reference>
<reference key="12">
    <citation type="journal article" date="2014" name="J. Cell Biol.">
        <title>Uniform nomenclature for the mitochondrial contact site and cristae organizing system.</title>
        <authorList>
            <person name="Pfanner N."/>
            <person name="van der Laan M."/>
            <person name="Amati P."/>
            <person name="Capaldi R.A."/>
            <person name="Caudy A.A."/>
            <person name="Chacinska A."/>
            <person name="Darshi M."/>
            <person name="Deckers M."/>
            <person name="Hoppins S."/>
            <person name="Icho T."/>
            <person name="Jakobs S."/>
            <person name="Ji J."/>
            <person name="Kozjak-Pavlovic V."/>
            <person name="Meisinger C."/>
            <person name="Odgren P.R."/>
            <person name="Park S.K."/>
            <person name="Rehling P."/>
            <person name="Reichert A.S."/>
            <person name="Sheikh M.S."/>
            <person name="Taylor S.S."/>
            <person name="Tsuchida N."/>
            <person name="van der Bliek A.M."/>
            <person name="van der Klei I.J."/>
            <person name="Weissman J.S."/>
            <person name="Westermann B."/>
            <person name="Zha J."/>
            <person name="Neupert W."/>
            <person name="Nunnari J."/>
        </authorList>
    </citation>
    <scope>NOMENCLATURE</scope>
</reference>
<sequence length="106" mass="12388">MSKLGPLARSVKWTLSVGVIGSVFYLYRYSNNGYFYDHDATWLKQDHQVQDLVDRKEVVPGETRNRKLVVTDDGTAWSRTMGESIKDIWNEQIRNSVDWIYSWGKN</sequence>
<protein>
    <recommendedName>
        <fullName>MICOS complex subunit MIC12</fullName>
    </recommendedName>
    <alternativeName>
        <fullName>Altered inheritance of mitochondria protein 5, mitochondrial</fullName>
    </alternativeName>
    <alternativeName>
        <fullName>Found in mitochondrial proteome protein 51</fullName>
    </alternativeName>
    <alternativeName>
        <fullName>Mitochondrial contact site complex 12 kDa subunit</fullName>
    </alternativeName>
</protein>
<organism>
    <name type="scientific">Saccharomyces cerevisiae (strain ATCC 204508 / S288c)</name>
    <name type="common">Baker's yeast</name>
    <dbReference type="NCBI Taxonomy" id="559292"/>
    <lineage>
        <taxon>Eukaryota</taxon>
        <taxon>Fungi</taxon>
        <taxon>Dikarya</taxon>
        <taxon>Ascomycota</taxon>
        <taxon>Saccharomycotina</taxon>
        <taxon>Saccharomycetes</taxon>
        <taxon>Saccharomycetales</taxon>
        <taxon>Saccharomycetaceae</taxon>
        <taxon>Saccharomyces</taxon>
    </lineage>
</organism>
<feature type="chain" id="PRO_0000202527" description="MICOS complex subunit MIC12">
    <location>
        <begin position="1"/>
        <end position="106"/>
    </location>
</feature>
<feature type="topological domain" description="Mitochondrial matrix" evidence="1">
    <location>
        <begin position="1"/>
        <end position="10"/>
    </location>
</feature>
<feature type="transmembrane region" description="Helical" evidence="1">
    <location>
        <begin position="11"/>
        <end position="27"/>
    </location>
</feature>
<feature type="topological domain" description="Mitochondrial intermembrane" evidence="1">
    <location>
        <begin position="28"/>
        <end position="106"/>
    </location>
</feature>
<comment type="function">
    <text evidence="5 6">Component of the MICOS complex, a large protein complex of the mitochondrial inner membrane that plays crucial roles in the maintenance of crista junctions, inner membrane architecture, and formation of contact sites to the outer membrane.</text>
</comment>
<comment type="subunit">
    <text evidence="6 7">Component of the mitochondrial contact site and cristae organizing system (MICOS) complex, composed of at least MIC10, MIC12, MIC19, MIC26, MIC27 and MIC60. This complex was also known under the names MINOS or MitOS complex. Interacts with OM45 and POR1.</text>
</comment>
<comment type="subcellular location">
    <subcellularLocation>
        <location evidence="8">Mitochondrion inner membrane</location>
        <topology evidence="8">Single-pass membrane protein</topology>
    </subcellularLocation>
    <text evidence="2 5 6 7">Enriched at crista junctions.</text>
</comment>
<comment type="disruption phenotype">
    <text evidence="4 5 6">Increases frequency of mitochondrial genome loss. Partially altered shape of the mitochondrial network with condensed, fragmented mitochondria accumulating at the periphery of cells. 20-40% of mitochondria exhibit an increased inner membrane surface and stacks of lamellar cristae disconnected from the inner boundary membrane.</text>
</comment>
<comment type="miscellaneous">
    <text evidence="3">Present with 2550 molecules/cell in log phase SD medium.</text>
</comment>
<comment type="similarity">
    <text evidence="8">Belongs to the MICOS complex subunit Mic12 family.</text>
</comment>
<proteinExistence type="evidence at protein level"/>